<dbReference type="EC" id="4.1.1.39" evidence="1"/>
<dbReference type="EMBL" id="L01935">
    <property type="protein sequence ID" value="AAA84501.2"/>
    <property type="molecule type" value="Genomic_DNA"/>
</dbReference>
<dbReference type="SMR" id="P28433"/>
<dbReference type="GO" id="GO:0009507">
    <property type="term" value="C:chloroplast"/>
    <property type="evidence" value="ECO:0007669"/>
    <property type="project" value="UniProtKB-SubCell"/>
</dbReference>
<dbReference type="GO" id="GO:0000287">
    <property type="term" value="F:magnesium ion binding"/>
    <property type="evidence" value="ECO:0007669"/>
    <property type="project" value="InterPro"/>
</dbReference>
<dbReference type="GO" id="GO:0004497">
    <property type="term" value="F:monooxygenase activity"/>
    <property type="evidence" value="ECO:0007669"/>
    <property type="project" value="UniProtKB-KW"/>
</dbReference>
<dbReference type="GO" id="GO:0016984">
    <property type="term" value="F:ribulose-bisphosphate carboxylase activity"/>
    <property type="evidence" value="ECO:0007669"/>
    <property type="project" value="UniProtKB-EC"/>
</dbReference>
<dbReference type="GO" id="GO:0009853">
    <property type="term" value="P:photorespiration"/>
    <property type="evidence" value="ECO:0007669"/>
    <property type="project" value="UniProtKB-KW"/>
</dbReference>
<dbReference type="GO" id="GO:0019253">
    <property type="term" value="P:reductive pentose-phosphate cycle"/>
    <property type="evidence" value="ECO:0007669"/>
    <property type="project" value="UniProtKB-KW"/>
</dbReference>
<dbReference type="CDD" id="cd08212">
    <property type="entry name" value="RuBisCO_large_I"/>
    <property type="match status" value="1"/>
</dbReference>
<dbReference type="FunFam" id="3.20.20.110:FF:000001">
    <property type="entry name" value="Ribulose bisphosphate carboxylase large chain"/>
    <property type="match status" value="1"/>
</dbReference>
<dbReference type="FunFam" id="3.30.70.150:FF:000001">
    <property type="entry name" value="Ribulose bisphosphate carboxylase large chain"/>
    <property type="match status" value="1"/>
</dbReference>
<dbReference type="Gene3D" id="3.20.20.110">
    <property type="entry name" value="Ribulose bisphosphate carboxylase, large subunit, C-terminal domain"/>
    <property type="match status" value="1"/>
</dbReference>
<dbReference type="Gene3D" id="3.30.70.150">
    <property type="entry name" value="RuBisCO large subunit, N-terminal domain"/>
    <property type="match status" value="1"/>
</dbReference>
<dbReference type="HAMAP" id="MF_01338">
    <property type="entry name" value="RuBisCO_L_type1"/>
    <property type="match status" value="1"/>
</dbReference>
<dbReference type="InterPro" id="IPR033966">
    <property type="entry name" value="RuBisCO"/>
</dbReference>
<dbReference type="InterPro" id="IPR020878">
    <property type="entry name" value="RuBisCo_large_chain_AS"/>
</dbReference>
<dbReference type="InterPro" id="IPR000685">
    <property type="entry name" value="RuBisCO_lsu_C"/>
</dbReference>
<dbReference type="InterPro" id="IPR036376">
    <property type="entry name" value="RuBisCO_lsu_C_sf"/>
</dbReference>
<dbReference type="InterPro" id="IPR017443">
    <property type="entry name" value="RuBisCO_lsu_fd_N"/>
</dbReference>
<dbReference type="InterPro" id="IPR036422">
    <property type="entry name" value="RuBisCO_lsu_N_sf"/>
</dbReference>
<dbReference type="InterPro" id="IPR020888">
    <property type="entry name" value="RuBisCO_lsuI"/>
</dbReference>
<dbReference type="NCBIfam" id="NF003252">
    <property type="entry name" value="PRK04208.1"/>
    <property type="match status" value="1"/>
</dbReference>
<dbReference type="PANTHER" id="PTHR42704">
    <property type="entry name" value="RIBULOSE BISPHOSPHATE CARBOXYLASE"/>
    <property type="match status" value="1"/>
</dbReference>
<dbReference type="PANTHER" id="PTHR42704:SF15">
    <property type="entry name" value="RIBULOSE BISPHOSPHATE CARBOXYLASE LARGE CHAIN"/>
    <property type="match status" value="1"/>
</dbReference>
<dbReference type="Pfam" id="PF00016">
    <property type="entry name" value="RuBisCO_large"/>
    <property type="match status" value="1"/>
</dbReference>
<dbReference type="Pfam" id="PF02788">
    <property type="entry name" value="RuBisCO_large_N"/>
    <property type="match status" value="1"/>
</dbReference>
<dbReference type="SFLD" id="SFLDG01052">
    <property type="entry name" value="RuBisCO"/>
    <property type="match status" value="1"/>
</dbReference>
<dbReference type="SFLD" id="SFLDS00014">
    <property type="entry name" value="RuBisCO"/>
    <property type="match status" value="1"/>
</dbReference>
<dbReference type="SFLD" id="SFLDG00301">
    <property type="entry name" value="RuBisCO-like_proteins"/>
    <property type="match status" value="1"/>
</dbReference>
<dbReference type="SUPFAM" id="SSF51649">
    <property type="entry name" value="RuBisCo, C-terminal domain"/>
    <property type="match status" value="1"/>
</dbReference>
<dbReference type="SUPFAM" id="SSF54966">
    <property type="entry name" value="RuBisCO, large subunit, small (N-terminal) domain"/>
    <property type="match status" value="1"/>
</dbReference>
<dbReference type="PROSITE" id="PS00157">
    <property type="entry name" value="RUBISCO_LARGE"/>
    <property type="match status" value="1"/>
</dbReference>
<name>RBL_NELCA</name>
<geneLocation type="chloroplast"/>
<comment type="function">
    <text evidence="1">RuBisCO catalyzes two reactions: the carboxylation of D-ribulose 1,5-bisphosphate, the primary event in carbon dioxide fixation, as well as the oxidative fragmentation of the pentose substrate in the photorespiration process. Both reactions occur simultaneously and in competition at the same active site.</text>
</comment>
<comment type="catalytic activity">
    <reaction evidence="1">
        <text>2 (2R)-3-phosphoglycerate + 2 H(+) = D-ribulose 1,5-bisphosphate + CO2 + H2O</text>
        <dbReference type="Rhea" id="RHEA:23124"/>
        <dbReference type="ChEBI" id="CHEBI:15377"/>
        <dbReference type="ChEBI" id="CHEBI:15378"/>
        <dbReference type="ChEBI" id="CHEBI:16526"/>
        <dbReference type="ChEBI" id="CHEBI:57870"/>
        <dbReference type="ChEBI" id="CHEBI:58272"/>
        <dbReference type="EC" id="4.1.1.39"/>
    </reaction>
</comment>
<comment type="catalytic activity">
    <reaction evidence="1">
        <text>D-ribulose 1,5-bisphosphate + O2 = 2-phosphoglycolate + (2R)-3-phosphoglycerate + 2 H(+)</text>
        <dbReference type="Rhea" id="RHEA:36631"/>
        <dbReference type="ChEBI" id="CHEBI:15378"/>
        <dbReference type="ChEBI" id="CHEBI:15379"/>
        <dbReference type="ChEBI" id="CHEBI:57870"/>
        <dbReference type="ChEBI" id="CHEBI:58033"/>
        <dbReference type="ChEBI" id="CHEBI:58272"/>
    </reaction>
</comment>
<comment type="cofactor">
    <cofactor evidence="1">
        <name>Mg(2+)</name>
        <dbReference type="ChEBI" id="CHEBI:18420"/>
    </cofactor>
    <text evidence="1">Binds 1 Mg(2+) ion per subunit.</text>
</comment>
<comment type="subunit">
    <text evidence="1">Heterohexadecamer of 8 large chains and 8 small chains; disulfide-linked. The disulfide link is formed within the large subunit homodimers.</text>
</comment>
<comment type="subcellular location">
    <subcellularLocation>
        <location>Plastid</location>
        <location>Chloroplast</location>
    </subcellularLocation>
</comment>
<comment type="PTM">
    <text evidence="1">The disulfide bond which can form in the large chain dimeric partners within the hexadecamer appears to be associated with oxidative stress and protein turnover.</text>
</comment>
<comment type="miscellaneous">
    <text evidence="1">The basic functional RuBisCO is composed of a large chain homodimer in a 'head-to-tail' conformation. In form I RuBisCO this homodimer is arranged in a barrel-like tetramer with the small subunits forming a tetrameric 'cap' on each end of the 'barrel'.</text>
</comment>
<comment type="similarity">
    <text evidence="1">Belongs to the RuBisCO large chain family. Type I subfamily.</text>
</comment>
<keyword id="KW-0113">Calvin cycle</keyword>
<keyword id="KW-0120">Carbon dioxide fixation</keyword>
<keyword id="KW-0150">Chloroplast</keyword>
<keyword id="KW-1015">Disulfide bond</keyword>
<keyword id="KW-0456">Lyase</keyword>
<keyword id="KW-0460">Magnesium</keyword>
<keyword id="KW-0479">Metal-binding</keyword>
<keyword id="KW-0488">Methylation</keyword>
<keyword id="KW-0503">Monooxygenase</keyword>
<keyword id="KW-0560">Oxidoreductase</keyword>
<keyword id="KW-0601">Photorespiration</keyword>
<keyword id="KW-0602">Photosynthesis</keyword>
<keyword id="KW-0934">Plastid</keyword>
<proteinExistence type="inferred from homology"/>
<feature type="chain" id="PRO_0000062537" description="Ribulose bisphosphate carboxylase large chain">
    <location>
        <begin position="1" status="less than"/>
        <end position="466"/>
    </location>
</feature>
<feature type="active site" description="Proton acceptor" evidence="1">
    <location>
        <position position="165"/>
    </location>
</feature>
<feature type="active site" description="Proton acceptor" evidence="1">
    <location>
        <position position="284"/>
    </location>
</feature>
<feature type="binding site" description="in homodimeric partner" evidence="1">
    <location>
        <position position="113"/>
    </location>
    <ligand>
        <name>substrate</name>
    </ligand>
</feature>
<feature type="binding site" evidence="1">
    <location>
        <position position="163"/>
    </location>
    <ligand>
        <name>substrate</name>
    </ligand>
</feature>
<feature type="binding site" evidence="1">
    <location>
        <position position="167"/>
    </location>
    <ligand>
        <name>substrate</name>
    </ligand>
</feature>
<feature type="binding site" description="via carbamate group" evidence="1">
    <location>
        <position position="191"/>
    </location>
    <ligand>
        <name>Mg(2+)</name>
        <dbReference type="ChEBI" id="CHEBI:18420"/>
    </ligand>
</feature>
<feature type="binding site" evidence="1">
    <location>
        <position position="193"/>
    </location>
    <ligand>
        <name>Mg(2+)</name>
        <dbReference type="ChEBI" id="CHEBI:18420"/>
    </ligand>
</feature>
<feature type="binding site" evidence="1">
    <location>
        <position position="194"/>
    </location>
    <ligand>
        <name>Mg(2+)</name>
        <dbReference type="ChEBI" id="CHEBI:18420"/>
    </ligand>
</feature>
<feature type="binding site" evidence="1">
    <location>
        <position position="285"/>
    </location>
    <ligand>
        <name>substrate</name>
    </ligand>
</feature>
<feature type="binding site" evidence="1">
    <location>
        <position position="317"/>
    </location>
    <ligand>
        <name>substrate</name>
    </ligand>
</feature>
<feature type="binding site" evidence="1">
    <location>
        <position position="369"/>
    </location>
    <ligand>
        <name>substrate</name>
    </ligand>
</feature>
<feature type="site" description="Transition state stabilizer" evidence="1">
    <location>
        <position position="324"/>
    </location>
</feature>
<feature type="modified residue" description="N6,N6,N6-trimethyllysine" evidence="1">
    <location>
        <position position="4"/>
    </location>
</feature>
<feature type="modified residue" description="N6-carboxylysine" evidence="1">
    <location>
        <position position="191"/>
    </location>
</feature>
<feature type="disulfide bond" description="Interchain; in linked form" evidence="1">
    <location>
        <position position="237"/>
    </location>
</feature>
<feature type="non-terminal residue">
    <location>
        <position position="1"/>
    </location>
</feature>
<organism>
    <name type="scientific">Nelsonia canescens</name>
    <name type="common">Blue pussyleaf</name>
    <name type="synonym">Justicia canescens</name>
    <dbReference type="NCBI Taxonomy" id="4193"/>
    <lineage>
        <taxon>Eukaryota</taxon>
        <taxon>Viridiplantae</taxon>
        <taxon>Streptophyta</taxon>
        <taxon>Embryophyta</taxon>
        <taxon>Tracheophyta</taxon>
        <taxon>Spermatophyta</taxon>
        <taxon>Magnoliopsida</taxon>
        <taxon>eudicotyledons</taxon>
        <taxon>Gunneridae</taxon>
        <taxon>Pentapetalae</taxon>
        <taxon>asterids</taxon>
        <taxon>lamiids</taxon>
        <taxon>Lamiales</taxon>
        <taxon>Acanthaceae</taxon>
        <taxon>Nelsonioideae</taxon>
        <taxon>Nelsonia</taxon>
    </lineage>
</organism>
<evidence type="ECO:0000255" key="1">
    <source>
        <dbReference type="HAMAP-Rule" id="MF_01338"/>
    </source>
</evidence>
<gene>
    <name evidence="1" type="primary">rbcL</name>
</gene>
<accession>P28433</accession>
<reference key="1">
    <citation type="journal article" date="1992" name="Science">
        <title>Carnivorous plants: phylogeny and structural evolution.</title>
        <authorList>
            <person name="Albert V.A."/>
            <person name="Williams S.E."/>
            <person name="Chase M.W."/>
        </authorList>
    </citation>
    <scope>NUCLEOTIDE SEQUENCE [GENOMIC DNA]</scope>
</reference>
<protein>
    <recommendedName>
        <fullName evidence="1">Ribulose bisphosphate carboxylase large chain</fullName>
        <shortName evidence="1">RuBisCO large subunit</shortName>
        <ecNumber evidence="1">4.1.1.39</ecNumber>
    </recommendedName>
</protein>
<sequence length="466" mass="51626">VGFKAGVKEYKLTYYTPEYETKDTDILAAFRVTPQPGVPPEEAGAAVAAESSTGTWTTVWTDGLTSLDRYKGRCYNIEPVPGEADQYICYVAYPLDLFEEGSVTNMFTSIVGNVFGFKALRALRLEDLRIPVAYVKTFQGPPHGIQVERDKLNKYGRPLLGCTIKPKLGLSAKNYGRACYECLRGGLDFTKDDENVNSQPFMRWRDRFLFCAEAIYKSQAETGEIKGHYLNATAGTCEEMMKRAIFARELGVPIVMHDYLTGGFTANTSLAHYCRDNGLLLHIHRAMHAVIDRQKNHGMHFRVLAKALRMSGGDHIHAGTVVGKLEGERDITLGFVDLLRDDFIEKDRSRGIYFTQDWVSLPGVIPVASGGIHVWHMPALTEIFGDDSVLQFGGGTLGHPWGNAPGAAANRVALEACVQARNEGRDLAAEGNTIIREASKWSPELAAACEVWKEIKFEFKAVDTLD</sequence>